<reference evidence="3" key="1">
    <citation type="journal article" date="2001" name="Biochem. Biophys. Res. Commun.">
        <title>N-terminal sequences of small ion channels in rectal glands of sharks: a biochemical hallmark for classification and phylogeny?</title>
        <authorList>
            <person name="Schuurmans Stekhoven F.M.A.H."/>
            <person name="Flik G."/>
            <person name="Wendelaar Bonga S.E."/>
        </authorList>
    </citation>
    <scope>PROTEIN SEQUENCE</scope>
    <source>
        <tissue evidence="1">Rectal gland</tissue>
    </source>
</reference>
<feature type="chain" id="PRO_0000064351" description="13 kDa protein">
    <location>
        <begin position="1"/>
        <end position="13" status="greater than"/>
    </location>
</feature>
<feature type="non-terminal residue" evidence="2">
    <location>
        <position position="13"/>
    </location>
</feature>
<protein>
    <recommendedName>
        <fullName>13 kDa protein</fullName>
    </recommendedName>
</protein>
<comment type="subcellular location">
    <subcellularLocation>
        <location>Microsome</location>
    </subcellularLocation>
    <subcellularLocation>
        <location>Endoplasmic reticulum</location>
    </subcellularLocation>
</comment>
<keyword id="KW-0903">Direct protein sequencing</keyword>
<keyword id="KW-0256">Endoplasmic reticulum</keyword>
<keyword id="KW-0492">Microsome</keyword>
<evidence type="ECO:0000269" key="1">
    <source>
    </source>
</evidence>
<evidence type="ECO:0000303" key="2">
    <source>
    </source>
</evidence>
<evidence type="ECO:0000305" key="3"/>
<name>13KDA_TRISC</name>
<sequence length="13" mass="1497">AGEPANNEDRFNY</sequence>
<accession>P83010</accession>
<proteinExistence type="evidence at protein level"/>
<dbReference type="GO" id="GO:0005783">
    <property type="term" value="C:endoplasmic reticulum"/>
    <property type="evidence" value="ECO:0007669"/>
    <property type="project" value="UniProtKB-SubCell"/>
</dbReference>
<dbReference type="GO" id="GO:0043231">
    <property type="term" value="C:intracellular membrane-bounded organelle"/>
    <property type="evidence" value="ECO:0000314"/>
    <property type="project" value="UniProtKB"/>
</dbReference>
<organism>
    <name type="scientific">Triakis scyllium</name>
    <name type="common">Banded houndshark</name>
    <name type="synonym">Hemigaleus pingi</name>
    <dbReference type="NCBI Taxonomy" id="30494"/>
    <lineage>
        <taxon>Eukaryota</taxon>
        <taxon>Metazoa</taxon>
        <taxon>Chordata</taxon>
        <taxon>Craniata</taxon>
        <taxon>Vertebrata</taxon>
        <taxon>Chondrichthyes</taxon>
        <taxon>Elasmobranchii</taxon>
        <taxon>Galeomorphii</taxon>
        <taxon>Galeoidea</taxon>
        <taxon>Carcharhiniformes</taxon>
        <taxon>Triakidae</taxon>
        <taxon>Triakis</taxon>
    </lineage>
</organism>